<reference key="1">
    <citation type="journal article" date="2007" name="Plant Biotechnol. J.">
        <title>Functional analysis of rice NPR1-like genes reveals that OsNPR1/NH1 is the rice orthologue conferring disease resistance with enhanced herbivore susceptibility.</title>
        <authorList>
            <person name="Yuan Y."/>
            <person name="Zhong S."/>
            <person name="Li Q."/>
            <person name="Zhu Z."/>
            <person name="Lou Y."/>
            <person name="Wang L."/>
            <person name="Wang J."/>
            <person name="Wang M."/>
            <person name="Li Q."/>
            <person name="Yang D."/>
            <person name="He Z."/>
        </authorList>
    </citation>
    <scope>NUCLEOTIDE SEQUENCE [GENOMIC DNA / MRNA] (ISOFORM 1)</scope>
    <scope>FUNCTION</scope>
</reference>
<reference key="2">
    <citation type="submission" date="2010-07" db="EMBL/GenBank/DDBJ databases">
        <title>Oryza sativa japonica group cultivar Dongjin putative NPR1-like protein 3 (NPR3) mRNA.</title>
        <authorList>
            <person name="Moon S.-J."/>
            <person name="Shin D."/>
            <person name="Kim B.-G."/>
            <person name="Park S.R."/>
            <person name="Byun M.-O."/>
        </authorList>
    </citation>
    <scope>NUCLEOTIDE SEQUENCE [MRNA] (ISOFORM 1)</scope>
    <source>
        <strain>cv. Dongjin</strain>
    </source>
</reference>
<reference key="3">
    <citation type="journal article" date="2005" name="Genome Res.">
        <title>Sequence, annotation, and analysis of synteny between rice chromosome 3 and diverged grass species.</title>
        <authorList>
            <consortium name="The rice chromosome 3 sequencing consortium"/>
            <person name="Buell C.R."/>
            <person name="Yuan Q."/>
            <person name="Ouyang S."/>
            <person name="Liu J."/>
            <person name="Zhu W."/>
            <person name="Wang A."/>
            <person name="Maiti R."/>
            <person name="Haas B."/>
            <person name="Wortman J."/>
            <person name="Pertea M."/>
            <person name="Jones K.M."/>
            <person name="Kim M."/>
            <person name="Overton L."/>
            <person name="Tsitrin T."/>
            <person name="Fadrosh D."/>
            <person name="Bera J."/>
            <person name="Weaver B."/>
            <person name="Jin S."/>
            <person name="Johri S."/>
            <person name="Reardon M."/>
            <person name="Webb K."/>
            <person name="Hill J."/>
            <person name="Moffat K."/>
            <person name="Tallon L."/>
            <person name="Van Aken S."/>
            <person name="Lewis M."/>
            <person name="Utterback T."/>
            <person name="Feldblyum T."/>
            <person name="Zismann V."/>
            <person name="Iobst S."/>
            <person name="Hsiao J."/>
            <person name="de Vazeille A.R."/>
            <person name="Salzberg S.L."/>
            <person name="White O."/>
            <person name="Fraser C.M."/>
            <person name="Yu Y."/>
            <person name="Kim H."/>
            <person name="Rambo T."/>
            <person name="Currie J."/>
            <person name="Collura K."/>
            <person name="Kernodle-Thompson S."/>
            <person name="Wei F."/>
            <person name="Kudrna K."/>
            <person name="Ammiraju J.S.S."/>
            <person name="Luo M."/>
            <person name="Goicoechea J.L."/>
            <person name="Wing R.A."/>
            <person name="Henry D."/>
            <person name="Oates R."/>
            <person name="Palmer M."/>
            <person name="Pries G."/>
            <person name="Saski C."/>
            <person name="Simmons J."/>
            <person name="Soderlund C."/>
            <person name="Nelson W."/>
            <person name="de la Bastide M."/>
            <person name="Spiegel L."/>
            <person name="Nascimento L."/>
            <person name="Huang E."/>
            <person name="Preston R."/>
            <person name="Zutavern T."/>
            <person name="Palmer L."/>
            <person name="O'Shaughnessy A."/>
            <person name="Dike S."/>
            <person name="McCombie W.R."/>
            <person name="Minx P."/>
            <person name="Cordum H."/>
            <person name="Wilson R."/>
            <person name="Jin W."/>
            <person name="Lee H.R."/>
            <person name="Jiang J."/>
            <person name="Jackson S."/>
        </authorList>
    </citation>
    <scope>NUCLEOTIDE SEQUENCE [LARGE SCALE GENOMIC DNA]</scope>
    <source>
        <strain>cv. Nipponbare</strain>
    </source>
</reference>
<reference key="4">
    <citation type="journal article" date="2005" name="Nature">
        <title>The map-based sequence of the rice genome.</title>
        <authorList>
            <consortium name="International rice genome sequencing project (IRGSP)"/>
        </authorList>
    </citation>
    <scope>NUCLEOTIDE SEQUENCE [LARGE SCALE GENOMIC DNA]</scope>
    <source>
        <strain>cv. Nipponbare</strain>
    </source>
</reference>
<reference key="5">
    <citation type="journal article" date="2008" name="Nucleic Acids Res.">
        <title>The rice annotation project database (RAP-DB): 2008 update.</title>
        <authorList>
            <consortium name="The rice annotation project (RAP)"/>
        </authorList>
    </citation>
    <scope>GENOME REANNOTATION</scope>
    <source>
        <strain>cv. Nipponbare</strain>
    </source>
</reference>
<reference key="6">
    <citation type="journal article" date="2013" name="Rice">
        <title>Improvement of the Oryza sativa Nipponbare reference genome using next generation sequence and optical map data.</title>
        <authorList>
            <person name="Kawahara Y."/>
            <person name="de la Bastide M."/>
            <person name="Hamilton J.P."/>
            <person name="Kanamori H."/>
            <person name="McCombie W.R."/>
            <person name="Ouyang S."/>
            <person name="Schwartz D.C."/>
            <person name="Tanaka T."/>
            <person name="Wu J."/>
            <person name="Zhou S."/>
            <person name="Childs K.L."/>
            <person name="Davidson R.M."/>
            <person name="Lin H."/>
            <person name="Quesada-Ocampo L."/>
            <person name="Vaillancourt B."/>
            <person name="Sakai H."/>
            <person name="Lee S.S."/>
            <person name="Kim J."/>
            <person name="Numa H."/>
            <person name="Itoh T."/>
            <person name="Buell C.R."/>
            <person name="Matsumoto T."/>
        </authorList>
    </citation>
    <scope>GENOME REANNOTATION</scope>
    <source>
        <strain>cv. Nipponbare</strain>
    </source>
</reference>
<reference key="7">
    <citation type="journal article" date="2005" name="PLoS Biol.">
        <title>The genomes of Oryza sativa: a history of duplications.</title>
        <authorList>
            <person name="Yu J."/>
            <person name="Wang J."/>
            <person name="Lin W."/>
            <person name="Li S."/>
            <person name="Li H."/>
            <person name="Zhou J."/>
            <person name="Ni P."/>
            <person name="Dong W."/>
            <person name="Hu S."/>
            <person name="Zeng C."/>
            <person name="Zhang J."/>
            <person name="Zhang Y."/>
            <person name="Li R."/>
            <person name="Xu Z."/>
            <person name="Li S."/>
            <person name="Li X."/>
            <person name="Zheng H."/>
            <person name="Cong L."/>
            <person name="Lin L."/>
            <person name="Yin J."/>
            <person name="Geng J."/>
            <person name="Li G."/>
            <person name="Shi J."/>
            <person name="Liu J."/>
            <person name="Lv H."/>
            <person name="Li J."/>
            <person name="Wang J."/>
            <person name="Deng Y."/>
            <person name="Ran L."/>
            <person name="Shi X."/>
            <person name="Wang X."/>
            <person name="Wu Q."/>
            <person name="Li C."/>
            <person name="Ren X."/>
            <person name="Wang J."/>
            <person name="Wang X."/>
            <person name="Li D."/>
            <person name="Liu D."/>
            <person name="Zhang X."/>
            <person name="Ji Z."/>
            <person name="Zhao W."/>
            <person name="Sun Y."/>
            <person name="Zhang Z."/>
            <person name="Bao J."/>
            <person name="Han Y."/>
            <person name="Dong L."/>
            <person name="Ji J."/>
            <person name="Chen P."/>
            <person name="Wu S."/>
            <person name="Liu J."/>
            <person name="Xiao Y."/>
            <person name="Bu D."/>
            <person name="Tan J."/>
            <person name="Yang L."/>
            <person name="Ye C."/>
            <person name="Zhang J."/>
            <person name="Xu J."/>
            <person name="Zhou Y."/>
            <person name="Yu Y."/>
            <person name="Zhang B."/>
            <person name="Zhuang S."/>
            <person name="Wei H."/>
            <person name="Liu B."/>
            <person name="Lei M."/>
            <person name="Yu H."/>
            <person name="Li Y."/>
            <person name="Xu H."/>
            <person name="Wei S."/>
            <person name="He X."/>
            <person name="Fang L."/>
            <person name="Zhang Z."/>
            <person name="Zhang Y."/>
            <person name="Huang X."/>
            <person name="Su Z."/>
            <person name="Tong W."/>
            <person name="Li J."/>
            <person name="Tong Z."/>
            <person name="Li S."/>
            <person name="Ye J."/>
            <person name="Wang L."/>
            <person name="Fang L."/>
            <person name="Lei T."/>
            <person name="Chen C.-S."/>
            <person name="Chen H.-C."/>
            <person name="Xu Z."/>
            <person name="Li H."/>
            <person name="Huang H."/>
            <person name="Zhang F."/>
            <person name="Xu H."/>
            <person name="Li N."/>
            <person name="Zhao C."/>
            <person name="Li S."/>
            <person name="Dong L."/>
            <person name="Huang Y."/>
            <person name="Li L."/>
            <person name="Xi Y."/>
            <person name="Qi Q."/>
            <person name="Li W."/>
            <person name="Zhang B."/>
            <person name="Hu W."/>
            <person name="Zhang Y."/>
            <person name="Tian X."/>
            <person name="Jiao Y."/>
            <person name="Liang X."/>
            <person name="Jin J."/>
            <person name="Gao L."/>
            <person name="Zheng W."/>
            <person name="Hao B."/>
            <person name="Liu S.-M."/>
            <person name="Wang W."/>
            <person name="Yuan L."/>
            <person name="Cao M."/>
            <person name="McDermott J."/>
            <person name="Samudrala R."/>
            <person name="Wang J."/>
            <person name="Wong G.K.-S."/>
            <person name="Yang H."/>
        </authorList>
    </citation>
    <scope>NUCLEOTIDE SEQUENCE [LARGE SCALE GENOMIC DNA]</scope>
    <source>
        <strain>cv. Nipponbare</strain>
    </source>
</reference>
<reference key="8">
    <citation type="journal article" date="2003" name="Science">
        <title>Collection, mapping, and annotation of over 28,000 cDNA clones from japonica rice.</title>
        <authorList>
            <consortium name="The rice full-length cDNA consortium"/>
        </authorList>
    </citation>
    <scope>NUCLEOTIDE SEQUENCE [LARGE SCALE MRNA] (ISOFORMS 1 AND 2)</scope>
    <source>
        <strain>cv. Nipponbare</strain>
    </source>
</reference>
<reference key="9">
    <citation type="journal article" date="2011" name="Plant Biotechnol. J.">
        <title>Enhanced disease resistance and hypersensitivity to BTH by introduction of an NH1/OsNPR1 paralog.</title>
        <authorList>
            <person name="Bai W."/>
            <person name="Chern M."/>
            <person name="Ruan D."/>
            <person name="Canlas P.E."/>
            <person name="Sze-To W.H."/>
            <person name="Ronald P.C."/>
        </authorList>
    </citation>
    <scope>FUNCTION</scope>
    <source>
        <strain>cv. Kitaake</strain>
    </source>
</reference>
<reference key="10">
    <citation type="journal article" date="2014" name="BMC Genomics">
        <title>Interaction specificity and coexpression of rice NPR1 homologs 1 and 3 (NH1 and NH3), TGA transcription factors and negative regulator of resistance (NRR) proteins.</title>
        <authorList>
            <person name="Chern M."/>
            <person name="Bai W."/>
            <person name="Ruan D."/>
            <person name="Oh T."/>
            <person name="Chen X."/>
            <person name="Ronald P.C."/>
        </authorList>
    </citation>
    <scope>INTERACTION WITH TGA2.1; TGA2.2; TGA2.3; LG2; TGAL1; TGAL4; NRR; RH1; RH2 AND RH3</scope>
</reference>
<protein>
    <recommendedName>
        <fullName evidence="12">BTB/POZ domain and ankyrin repeat-containing protein NPR3</fullName>
        <shortName evidence="10">OsNPR3</shortName>
    </recommendedName>
</protein>
<proteinExistence type="evidence at protein level"/>
<feature type="chain" id="PRO_0000437002" description="BTB/POZ domain and ankyrin repeat-containing protein NPR3">
    <location>
        <begin position="1"/>
        <end position="589"/>
    </location>
</feature>
<feature type="domain" description="BTB" evidence="4">
    <location>
        <begin position="52"/>
        <end position="137"/>
    </location>
</feature>
<feature type="repeat" description="ANK 1" evidence="3">
    <location>
        <begin position="260"/>
        <end position="290"/>
    </location>
</feature>
<feature type="repeat" description="ANK 2" evidence="3">
    <location>
        <begin position="292"/>
        <end position="319"/>
    </location>
</feature>
<feature type="repeat" description="ANK 3" evidence="3">
    <location>
        <begin position="323"/>
        <end position="352"/>
    </location>
</feature>
<feature type="zinc finger region" description="C2HC NPR-type" evidence="5">
    <location>
        <begin position="140"/>
        <end position="154"/>
    </location>
</feature>
<feature type="region of interest" description="Disordered" evidence="6">
    <location>
        <begin position="1"/>
        <end position="25"/>
    </location>
</feature>
<feature type="region of interest" description="Salicylic acid-binding core (SBC)" evidence="2">
    <location>
        <begin position="382"/>
        <end position="521"/>
    </location>
</feature>
<feature type="region of interest" description="Disordered" evidence="6">
    <location>
        <begin position="555"/>
        <end position="589"/>
    </location>
</feature>
<feature type="compositionally biased region" description="Pro residues" evidence="6">
    <location>
        <begin position="13"/>
        <end position="22"/>
    </location>
</feature>
<feature type="compositionally biased region" description="Low complexity" evidence="6">
    <location>
        <begin position="558"/>
        <end position="571"/>
    </location>
</feature>
<feature type="compositionally biased region" description="Basic residues" evidence="6">
    <location>
        <begin position="580"/>
        <end position="589"/>
    </location>
</feature>
<feature type="binding site" evidence="5">
    <location>
        <position position="143"/>
    </location>
    <ligand>
        <name>Zn(2+)</name>
        <dbReference type="ChEBI" id="CHEBI:29105"/>
    </ligand>
</feature>
<feature type="binding site" evidence="5">
    <location>
        <position position="148"/>
    </location>
    <ligand>
        <name>Zn(2+)</name>
        <dbReference type="ChEBI" id="CHEBI:29105"/>
    </ligand>
</feature>
<feature type="binding site" evidence="5">
    <location>
        <position position="150"/>
    </location>
    <ligand>
        <name>Zn(2+)</name>
        <dbReference type="ChEBI" id="CHEBI:29105"/>
    </ligand>
</feature>
<feature type="binding site" evidence="5">
    <location>
        <position position="153"/>
    </location>
    <ligand>
        <name>Zn(2+)</name>
        <dbReference type="ChEBI" id="CHEBI:29105"/>
    </ligand>
</feature>
<feature type="binding site" evidence="2">
    <location>
        <position position="433"/>
    </location>
    <ligand>
        <name>salicylate</name>
        <dbReference type="ChEBI" id="CHEBI:30762"/>
    </ligand>
</feature>
<feature type="splice variant" id="VSP_058476" description="In isoform 2.">
    <original>R</original>
    <variation>S</variation>
    <location>
        <position position="573"/>
    </location>
</feature>
<feature type="splice variant" id="VSP_058477" description="In isoform 2.">
    <location>
        <begin position="574"/>
        <end position="589"/>
    </location>
</feature>
<keyword id="KW-0025">Alternative splicing</keyword>
<keyword id="KW-0040">ANK repeat</keyword>
<keyword id="KW-0479">Metal-binding</keyword>
<keyword id="KW-0539">Nucleus</keyword>
<keyword id="KW-0611">Plant defense</keyword>
<keyword id="KW-1185">Reference proteome</keyword>
<keyword id="KW-0677">Repeat</keyword>
<keyword id="KW-0833">Ubl conjugation pathway</keyword>
<keyword id="KW-0862">Zinc</keyword>
<keyword id="KW-0863">Zinc-finger</keyword>
<gene>
    <name evidence="10" type="primary">NPR3</name>
    <name evidence="11" type="synonym">NH3</name>
    <name evidence="15" type="ordered locus">Os03g0667100</name>
    <name evidence="14" type="ordered locus">LOC_Os03g46440</name>
    <name evidence="16" type="ORF">OsJ_12014</name>
    <name evidence="13" type="ORF">OSJNBa0056E06.6</name>
</gene>
<organism>
    <name type="scientific">Oryza sativa subsp. japonica</name>
    <name type="common">Rice</name>
    <dbReference type="NCBI Taxonomy" id="39947"/>
    <lineage>
        <taxon>Eukaryota</taxon>
        <taxon>Viridiplantae</taxon>
        <taxon>Streptophyta</taxon>
        <taxon>Embryophyta</taxon>
        <taxon>Tracheophyta</taxon>
        <taxon>Spermatophyta</taxon>
        <taxon>Magnoliopsida</taxon>
        <taxon>Liliopsida</taxon>
        <taxon>Poales</taxon>
        <taxon>Poaceae</taxon>
        <taxon>BOP clade</taxon>
        <taxon>Oryzoideae</taxon>
        <taxon>Oryzeae</taxon>
        <taxon>Oryzinae</taxon>
        <taxon>Oryza</taxon>
        <taxon>Oryza sativa</taxon>
    </lineage>
</organism>
<dbReference type="EMBL" id="DQ450951">
    <property type="protein sequence ID" value="ABE11617.1"/>
    <property type="molecule type" value="mRNA"/>
</dbReference>
<dbReference type="EMBL" id="DQ450952">
    <property type="protein sequence ID" value="ABE11618.1"/>
    <property type="molecule type" value="Genomic_DNA"/>
</dbReference>
<dbReference type="EMBL" id="HM991170">
    <property type="protein sequence ID" value="AEF30413.1"/>
    <property type="molecule type" value="mRNA"/>
</dbReference>
<dbReference type="EMBL" id="AC135792">
    <property type="protein sequence ID" value="AAR87166.1"/>
    <property type="molecule type" value="Genomic_DNA"/>
</dbReference>
<dbReference type="EMBL" id="AC135792">
    <property type="protein sequence ID" value="AAR87167.1"/>
    <property type="status" value="ALT_SEQ"/>
    <property type="molecule type" value="Genomic_DNA"/>
</dbReference>
<dbReference type="EMBL" id="AC135792">
    <property type="protein sequence ID" value="AAR87168.1"/>
    <property type="molecule type" value="Genomic_DNA"/>
</dbReference>
<dbReference type="EMBL" id="DP000009">
    <property type="protein sequence ID" value="ABF98078.1"/>
    <property type="molecule type" value="Genomic_DNA"/>
</dbReference>
<dbReference type="EMBL" id="DP000009">
    <property type="protein sequence ID" value="ABF98080.1"/>
    <property type="molecule type" value="Genomic_DNA"/>
</dbReference>
<dbReference type="EMBL" id="AP008209">
    <property type="protein sequence ID" value="BAF12764.1"/>
    <property type="molecule type" value="Genomic_DNA"/>
</dbReference>
<dbReference type="EMBL" id="AP014959">
    <property type="protein sequence ID" value="BAS85647.1"/>
    <property type="molecule type" value="Genomic_DNA"/>
</dbReference>
<dbReference type="EMBL" id="AP014959">
    <property type="protein sequence ID" value="BAS85650.1"/>
    <property type="molecule type" value="Genomic_DNA"/>
</dbReference>
<dbReference type="EMBL" id="CM000140">
    <property type="protein sequence ID" value="EAZ28048.1"/>
    <property type="molecule type" value="Genomic_DNA"/>
</dbReference>
<dbReference type="EMBL" id="AK065363">
    <property type="protein sequence ID" value="BAG89488.1"/>
    <property type="molecule type" value="mRNA"/>
</dbReference>
<dbReference type="EMBL" id="AK065952">
    <property type="protein sequence ID" value="BAG89750.1"/>
    <property type="molecule type" value="mRNA"/>
</dbReference>
<dbReference type="RefSeq" id="XP_015632015.1">
    <property type="nucleotide sequence ID" value="XM_015776529.1"/>
</dbReference>
<dbReference type="RefSeq" id="XP_015632016.1">
    <property type="nucleotide sequence ID" value="XM_015776530.1"/>
</dbReference>
<dbReference type="SMR" id="Q75HA6"/>
<dbReference type="FunCoup" id="Q75HA6">
    <property type="interactions" value="3"/>
</dbReference>
<dbReference type="STRING" id="39947.Q75HA6"/>
<dbReference type="PaxDb" id="39947-Q75HA6"/>
<dbReference type="EnsemblPlants" id="Os03t0667100-01">
    <molecule id="Q75HA6-1"/>
    <property type="protein sequence ID" value="Os03t0667100-01"/>
    <property type="gene ID" value="Os03g0667100"/>
</dbReference>
<dbReference type="Gramene" id="Os03t0667100-01">
    <molecule id="Q75HA6-1"/>
    <property type="protein sequence ID" value="Os03t0667100-01"/>
    <property type="gene ID" value="Os03g0667100"/>
</dbReference>
<dbReference type="KEGG" id="dosa:Os03g0667100"/>
<dbReference type="eggNOG" id="KOG0504">
    <property type="taxonomic scope" value="Eukaryota"/>
</dbReference>
<dbReference type="InParanoid" id="Q75HA6"/>
<dbReference type="OMA" id="AFTICKR"/>
<dbReference type="OrthoDB" id="71307at2759"/>
<dbReference type="PlantReactome" id="R-OSA-6788019">
    <property type="pathway name" value="Salicylic acid signaling"/>
</dbReference>
<dbReference type="UniPathway" id="UPA00143"/>
<dbReference type="Proteomes" id="UP000000763">
    <property type="component" value="Chromosome 3"/>
</dbReference>
<dbReference type="Proteomes" id="UP000007752">
    <property type="component" value="Chromosome 3"/>
</dbReference>
<dbReference type="Proteomes" id="UP000059680">
    <property type="component" value="Chromosome 3"/>
</dbReference>
<dbReference type="ExpressionAtlas" id="Q75HA6">
    <property type="expression patterns" value="baseline and differential"/>
</dbReference>
<dbReference type="GO" id="GO:0005634">
    <property type="term" value="C:nucleus"/>
    <property type="evidence" value="ECO:0000318"/>
    <property type="project" value="GO_Central"/>
</dbReference>
<dbReference type="GO" id="GO:0008270">
    <property type="term" value="F:zinc ion binding"/>
    <property type="evidence" value="ECO:0007669"/>
    <property type="project" value="UniProtKB-KW"/>
</dbReference>
<dbReference type="GO" id="GO:0042742">
    <property type="term" value="P:defense response to bacterium"/>
    <property type="evidence" value="ECO:0000315"/>
    <property type="project" value="UniProtKB"/>
</dbReference>
<dbReference type="GO" id="GO:0050832">
    <property type="term" value="P:defense response to fungus"/>
    <property type="evidence" value="ECO:0000318"/>
    <property type="project" value="GO_Central"/>
</dbReference>
<dbReference type="GO" id="GO:2000022">
    <property type="term" value="P:regulation of jasmonic acid mediated signaling pathway"/>
    <property type="evidence" value="ECO:0000318"/>
    <property type="project" value="GO_Central"/>
</dbReference>
<dbReference type="GO" id="GO:2000031">
    <property type="term" value="P:regulation of salicylic acid mediated signaling pathway"/>
    <property type="evidence" value="ECO:0007669"/>
    <property type="project" value="InterPro"/>
</dbReference>
<dbReference type="GO" id="GO:0009862">
    <property type="term" value="P:systemic acquired resistance, salicylic acid mediated signaling pathway"/>
    <property type="evidence" value="ECO:0007669"/>
    <property type="project" value="InterPro"/>
</dbReference>
<dbReference type="CDD" id="cd18310">
    <property type="entry name" value="BTB_POZ_NPR_plant"/>
    <property type="match status" value="1"/>
</dbReference>
<dbReference type="FunFam" id="3.30.710.10:FF:000110">
    <property type="entry name" value="Regulatory protein NPR3"/>
    <property type="match status" value="1"/>
</dbReference>
<dbReference type="FunFam" id="1.25.40.20:FF:000123">
    <property type="entry name" value="regulatory protein NPR3-like"/>
    <property type="match status" value="1"/>
</dbReference>
<dbReference type="Gene3D" id="1.25.40.20">
    <property type="entry name" value="Ankyrin repeat-containing domain"/>
    <property type="match status" value="1"/>
</dbReference>
<dbReference type="Gene3D" id="3.30.710.10">
    <property type="entry name" value="Potassium Channel Kv1.1, Chain A"/>
    <property type="match status" value="1"/>
</dbReference>
<dbReference type="InterPro" id="IPR002110">
    <property type="entry name" value="Ankyrin_rpt"/>
</dbReference>
<dbReference type="InterPro" id="IPR036770">
    <property type="entry name" value="Ankyrin_rpt-contain_sf"/>
</dbReference>
<dbReference type="InterPro" id="IPR000210">
    <property type="entry name" value="BTB/POZ_dom"/>
</dbReference>
<dbReference type="InterPro" id="IPR044292">
    <property type="entry name" value="NPR"/>
</dbReference>
<dbReference type="InterPro" id="IPR021094">
    <property type="entry name" value="NPR1/NIM1-like_C"/>
</dbReference>
<dbReference type="InterPro" id="IPR024228">
    <property type="entry name" value="NPR_central_dom"/>
</dbReference>
<dbReference type="InterPro" id="IPR011333">
    <property type="entry name" value="SKP1/BTB/POZ_sf"/>
</dbReference>
<dbReference type="PANTHER" id="PTHR46475:SF4">
    <property type="entry name" value="BTB_POZ DOMAIN AND ANKYRIN REPEAT-CONTAINING PROTEIN NPR3"/>
    <property type="match status" value="1"/>
</dbReference>
<dbReference type="PANTHER" id="PTHR46475">
    <property type="entry name" value="REGULATORY PROTEIN NPR3"/>
    <property type="match status" value="1"/>
</dbReference>
<dbReference type="Pfam" id="PF13637">
    <property type="entry name" value="Ank_4"/>
    <property type="match status" value="1"/>
</dbReference>
<dbReference type="Pfam" id="PF00651">
    <property type="entry name" value="BTB"/>
    <property type="match status" value="1"/>
</dbReference>
<dbReference type="Pfam" id="PF11900">
    <property type="entry name" value="DUF3420"/>
    <property type="match status" value="1"/>
</dbReference>
<dbReference type="Pfam" id="PF12313">
    <property type="entry name" value="NPR1_like_C"/>
    <property type="match status" value="1"/>
</dbReference>
<dbReference type="SMART" id="SM00248">
    <property type="entry name" value="ANK"/>
    <property type="match status" value="2"/>
</dbReference>
<dbReference type="SUPFAM" id="SSF48403">
    <property type="entry name" value="Ankyrin repeat"/>
    <property type="match status" value="1"/>
</dbReference>
<dbReference type="SUPFAM" id="SSF54695">
    <property type="entry name" value="POZ domain"/>
    <property type="match status" value="1"/>
</dbReference>
<dbReference type="PROSITE" id="PS50297">
    <property type="entry name" value="ANK_REP_REGION"/>
    <property type="match status" value="1"/>
</dbReference>
<dbReference type="PROSITE" id="PS50088">
    <property type="entry name" value="ANK_REPEAT"/>
    <property type="match status" value="1"/>
</dbReference>
<dbReference type="PROSITE" id="PS50097">
    <property type="entry name" value="BTB"/>
    <property type="match status" value="1"/>
</dbReference>
<dbReference type="PROSITE" id="PS52046">
    <property type="entry name" value="ZF_C2HC_NPR"/>
    <property type="match status" value="1"/>
</dbReference>
<comment type="function">
    <text evidence="1 2 7 8">Salicylic acid (SA)-binding substrate-specific adapter of an E3 ubiquitin-protein ligase complex (CUL3-RBX1-BTB) which mediates the ubiquitination and subsequent proteasomal degradation of target proteins (By similarity). Involved in defense response against the bacterial blight disease caused by Xanthomonas oryzae pv. oryzae (Xoo). Plants expressing an NPR3/NH3 transgene driven by its native promoter show enhanced resistance to the Xoo pathogen, and exhibit elevated sensitivity to benzothiadiazole (BTH) treatment and enhanced induction of defense-related genes upon treatment with BTH (PubMed:20561248). Intriguingly, constitutive over-expression of NPR3/NH3 with a ubiquitin promoter does not confer disease resistance to Xoo (PubMed:17309686).</text>
</comment>
<comment type="pathway">
    <text evidence="1">Protein modification; protein ubiquitination.</text>
</comment>
<comment type="subunit">
    <text evidence="9">Interacts with TGA2.1, TGA2.2, TGA2.3, LG2, TGAL1, TGAL4, NRR, RH1, RH2 and RH3.</text>
</comment>
<comment type="subcellular location">
    <subcellularLocation>
        <location evidence="2">Nucleus</location>
    </subcellularLocation>
</comment>
<comment type="alternative products">
    <event type="alternative splicing"/>
    <isoform>
        <id>Q75HA6-1</id>
        <name>1</name>
        <sequence type="displayed"/>
    </isoform>
    <isoform>
        <id>Q75HA6-2</id>
        <name>2</name>
        <sequence type="described" ref="VSP_058476 VSP_058477"/>
    </isoform>
</comment>
<comment type="domain">
    <text evidence="1">The BTB/POZ domain mediates the interaction with some component of ubiquitin ligase complexes.</text>
</comment>
<comment type="similarity">
    <text evidence="12">Belongs to the plant 'ANKYRIN-BTB/POZ' family. 'NPR1-like' subfamily.</text>
</comment>
<comment type="sequence caution" evidence="12">
    <conflict type="erroneous gene model prediction">
        <sequence resource="EMBL-CDS" id="AAR87167"/>
    </conflict>
</comment>
<name>NPR3_ORYSJ</name>
<accession>Q75HA6</accession>
<accession>Q75HA7</accession>
<accession>Q75HA8</accession>
<evidence type="ECO:0000250" key="1">
    <source>
        <dbReference type="UniProtKB" id="O22286"/>
    </source>
</evidence>
<evidence type="ECO:0000250" key="2">
    <source>
        <dbReference type="UniProtKB" id="Q5ICL9"/>
    </source>
</evidence>
<evidence type="ECO:0000255" key="3"/>
<evidence type="ECO:0000255" key="4">
    <source>
        <dbReference type="PROSITE-ProRule" id="PRU00037"/>
    </source>
</evidence>
<evidence type="ECO:0000255" key="5">
    <source>
        <dbReference type="PROSITE-ProRule" id="PRU01391"/>
    </source>
</evidence>
<evidence type="ECO:0000256" key="6">
    <source>
        <dbReference type="SAM" id="MobiDB-lite"/>
    </source>
</evidence>
<evidence type="ECO:0000269" key="7">
    <source>
    </source>
</evidence>
<evidence type="ECO:0000269" key="8">
    <source>
    </source>
</evidence>
<evidence type="ECO:0000269" key="9">
    <source>
    </source>
</evidence>
<evidence type="ECO:0000303" key="10">
    <source>
    </source>
</evidence>
<evidence type="ECO:0000303" key="11">
    <source>
    </source>
</evidence>
<evidence type="ECO:0000305" key="12"/>
<evidence type="ECO:0000312" key="13">
    <source>
        <dbReference type="EMBL" id="AAR87166.1"/>
    </source>
</evidence>
<evidence type="ECO:0000312" key="14">
    <source>
        <dbReference type="EMBL" id="ABF98080.1"/>
    </source>
</evidence>
<evidence type="ECO:0000312" key="15">
    <source>
        <dbReference type="EMBL" id="BAG89750.1"/>
    </source>
</evidence>
<evidence type="ECO:0000312" key="16">
    <source>
        <dbReference type="EMBL" id="EAZ28048.1"/>
    </source>
</evidence>
<sequence length="589" mass="65047">METSTISFSSSSPPSPPPPQPAPGDIDAVSLGRLSRNLENLLDPAFLNCADAEIVLASGGGDPGGGAVVGVHRCILAARSRFFYDHFSSAPAPAPATAGDKPQLDLDGLVPGGRHIGRDALVAVLSYLYTGRLRSAPPEAAACLDDGCSHDACRPAIDFVVESTYAASGFQISELVSLFQRRLSDFVNKALAEDILPILVVASTCHLPELLNQCIQRVANSNLDNRYLEKRLPDDLYAKLKEFRVPDEPHSGILDPEHEKRVRNIHKALDSDDVDLVGMLLKESPVTLDDAFAIHYAAAYCEPKVLAELLKLESANVNLKNSSGYTPLHMACMRREPDIIVSLIEKGASVLERTQDGRDALTICKRLTREKDRNEKSEKCKERSKAYLCIGVLQQEIKRRPQILEDQMSAEESIATPLLVDNFHMRLLNLENRVAFARIFFPSEAKLVMRIAQADSTQEFAGLTSANFSKLKEVDLNETPTMQNRRLRERLDALTKTVELGRRYFPHCSEVLDKFLNEESTDLILLESGTAEDQQTKRMRFSELREDVRKAFTKDKAAGAAISSSTSASSSPRYETKLRPGNKKGKLSR</sequence>